<organism>
    <name type="scientific">Trichlorobacter lovleyi (strain ATCC BAA-1151 / DSM 17278 / SZ)</name>
    <name type="common">Geobacter lovleyi</name>
    <dbReference type="NCBI Taxonomy" id="398767"/>
    <lineage>
        <taxon>Bacteria</taxon>
        <taxon>Pseudomonadati</taxon>
        <taxon>Thermodesulfobacteriota</taxon>
        <taxon>Desulfuromonadia</taxon>
        <taxon>Geobacterales</taxon>
        <taxon>Geobacteraceae</taxon>
        <taxon>Trichlorobacter</taxon>
    </lineage>
</organism>
<keyword id="KW-0030">Aminoacyl-tRNA synthetase</keyword>
<keyword id="KW-0067">ATP-binding</keyword>
<keyword id="KW-0963">Cytoplasm</keyword>
<keyword id="KW-0436">Ligase</keyword>
<keyword id="KW-0547">Nucleotide-binding</keyword>
<keyword id="KW-0648">Protein biosynthesis</keyword>
<keyword id="KW-1185">Reference proteome</keyword>
<sequence length="687" mass="76128">MSKELLLEIGAEEIPAGFVPKALASLEEMIRKELETARLCFDAIVTMGTPRRLTLHIKGLPVIQPDAELTAMGPSKKAAFDADGKPTKAAEGFARGQGVDVSALQVISTDKGEYLAVTRQETGRPTHELLAEILPRLVAGIPFKKSMRWADLDIRFARPVHWIVALFDGIVVPFSFGPIQSGNISRGHRFMANSTFPVRDFAHYLDECERHFVIVDQERRKETIRKETHRVAKTTGGHLLPDESLLEEVTYLVEYPSAIIGSIPAEFLVVPKEVLITSMRSHQRYFSVVDENGKLLPYFITIPNTLAEDPAVVVRGNERVLRARLSDARFFFDEDRKLRLESRVESLKSVVYQQKLGTSYEKMERFRALAEQLAEQLNPAAKQQAARTAFLCKADLVSGMVGEFPEVQGIMGREYALHDGEETAVANAIAEHYLPTQAGGDLPASDIGAFVSLADKLDTLCGCFGVGLIPTGAADPYALRRATIGMISIILDKGYSLSLSGLIDKSLELLAAKLTRPRDEVRHDVLEFFRGRFVNLQGNAYPADVVEAAMAAGFDDLADCAERIRALDTFRQRDDFQPLTVAFKRVCNIIKEGIDAPVAPALFQDEAEHTLYRVLQETKLSASDKIQQQQYLEALTDIAGLKWAVDAFFDAVMVMAEDSAVRNNRLALLTTINRLFSRIADFGRLAG</sequence>
<protein>
    <recommendedName>
        <fullName evidence="1">Glycine--tRNA ligase beta subunit</fullName>
        <ecNumber evidence="1">6.1.1.14</ecNumber>
    </recommendedName>
    <alternativeName>
        <fullName evidence="1">Glycyl-tRNA synthetase beta subunit</fullName>
        <shortName evidence="1">GlyRS</shortName>
    </alternativeName>
</protein>
<evidence type="ECO:0000255" key="1">
    <source>
        <dbReference type="HAMAP-Rule" id="MF_00255"/>
    </source>
</evidence>
<dbReference type="EC" id="6.1.1.14" evidence="1"/>
<dbReference type="EMBL" id="CP001089">
    <property type="protein sequence ID" value="ACD94745.1"/>
    <property type="molecule type" value="Genomic_DNA"/>
</dbReference>
<dbReference type="RefSeq" id="WP_012469095.1">
    <property type="nucleotide sequence ID" value="NC_010814.1"/>
</dbReference>
<dbReference type="SMR" id="B3E621"/>
<dbReference type="STRING" id="398767.Glov_1022"/>
<dbReference type="KEGG" id="glo:Glov_1022"/>
<dbReference type="eggNOG" id="COG0751">
    <property type="taxonomic scope" value="Bacteria"/>
</dbReference>
<dbReference type="HOGENOM" id="CLU_007220_2_2_7"/>
<dbReference type="OrthoDB" id="9775440at2"/>
<dbReference type="Proteomes" id="UP000002420">
    <property type="component" value="Chromosome"/>
</dbReference>
<dbReference type="GO" id="GO:0005829">
    <property type="term" value="C:cytosol"/>
    <property type="evidence" value="ECO:0007669"/>
    <property type="project" value="TreeGrafter"/>
</dbReference>
<dbReference type="GO" id="GO:0004814">
    <property type="term" value="F:arginine-tRNA ligase activity"/>
    <property type="evidence" value="ECO:0007669"/>
    <property type="project" value="InterPro"/>
</dbReference>
<dbReference type="GO" id="GO:0005524">
    <property type="term" value="F:ATP binding"/>
    <property type="evidence" value="ECO:0007669"/>
    <property type="project" value="UniProtKB-UniRule"/>
</dbReference>
<dbReference type="GO" id="GO:0004820">
    <property type="term" value="F:glycine-tRNA ligase activity"/>
    <property type="evidence" value="ECO:0007669"/>
    <property type="project" value="UniProtKB-UniRule"/>
</dbReference>
<dbReference type="GO" id="GO:0006420">
    <property type="term" value="P:arginyl-tRNA aminoacylation"/>
    <property type="evidence" value="ECO:0007669"/>
    <property type="project" value="InterPro"/>
</dbReference>
<dbReference type="GO" id="GO:0006426">
    <property type="term" value="P:glycyl-tRNA aminoacylation"/>
    <property type="evidence" value="ECO:0007669"/>
    <property type="project" value="UniProtKB-UniRule"/>
</dbReference>
<dbReference type="HAMAP" id="MF_00255">
    <property type="entry name" value="Gly_tRNA_synth_beta"/>
    <property type="match status" value="1"/>
</dbReference>
<dbReference type="InterPro" id="IPR008909">
    <property type="entry name" value="DALR_anticod-bd"/>
</dbReference>
<dbReference type="InterPro" id="IPR015944">
    <property type="entry name" value="Gly-tRNA-synth_bsu"/>
</dbReference>
<dbReference type="InterPro" id="IPR006194">
    <property type="entry name" value="Gly-tRNA-synth_heterodimer"/>
</dbReference>
<dbReference type="NCBIfam" id="TIGR00211">
    <property type="entry name" value="glyS"/>
    <property type="match status" value="1"/>
</dbReference>
<dbReference type="PANTHER" id="PTHR30075:SF2">
    <property type="entry name" value="GLYCINE--TRNA LIGASE, CHLOROPLASTIC_MITOCHONDRIAL 2"/>
    <property type="match status" value="1"/>
</dbReference>
<dbReference type="PANTHER" id="PTHR30075">
    <property type="entry name" value="GLYCYL-TRNA SYNTHETASE"/>
    <property type="match status" value="1"/>
</dbReference>
<dbReference type="Pfam" id="PF05746">
    <property type="entry name" value="DALR_1"/>
    <property type="match status" value="1"/>
</dbReference>
<dbReference type="Pfam" id="PF02092">
    <property type="entry name" value="tRNA_synt_2f"/>
    <property type="match status" value="1"/>
</dbReference>
<dbReference type="PRINTS" id="PR01045">
    <property type="entry name" value="TRNASYNTHGB"/>
</dbReference>
<dbReference type="SUPFAM" id="SSF109604">
    <property type="entry name" value="HD-domain/PDEase-like"/>
    <property type="match status" value="1"/>
</dbReference>
<dbReference type="PROSITE" id="PS50861">
    <property type="entry name" value="AA_TRNA_LIGASE_II_GLYAB"/>
    <property type="match status" value="1"/>
</dbReference>
<gene>
    <name evidence="1" type="primary">glyS</name>
    <name type="ordered locus">Glov_1022</name>
</gene>
<proteinExistence type="inferred from homology"/>
<reference key="1">
    <citation type="submission" date="2008-05" db="EMBL/GenBank/DDBJ databases">
        <title>Complete sequence of chromosome of Geobacter lovleyi SZ.</title>
        <authorList>
            <consortium name="US DOE Joint Genome Institute"/>
            <person name="Lucas S."/>
            <person name="Copeland A."/>
            <person name="Lapidus A."/>
            <person name="Glavina del Rio T."/>
            <person name="Dalin E."/>
            <person name="Tice H."/>
            <person name="Bruce D."/>
            <person name="Goodwin L."/>
            <person name="Pitluck S."/>
            <person name="Chertkov O."/>
            <person name="Meincke L."/>
            <person name="Brettin T."/>
            <person name="Detter J.C."/>
            <person name="Han C."/>
            <person name="Tapia R."/>
            <person name="Kuske C.R."/>
            <person name="Schmutz J."/>
            <person name="Larimer F."/>
            <person name="Land M."/>
            <person name="Hauser L."/>
            <person name="Kyrpides N."/>
            <person name="Mikhailova N."/>
            <person name="Sung Y."/>
            <person name="Fletcher K.E."/>
            <person name="Ritalahti K.M."/>
            <person name="Loeffler F.E."/>
            <person name="Richardson P."/>
        </authorList>
    </citation>
    <scope>NUCLEOTIDE SEQUENCE [LARGE SCALE GENOMIC DNA]</scope>
    <source>
        <strain>ATCC BAA-1151 / DSM 17278 / SZ</strain>
    </source>
</reference>
<accession>B3E621</accession>
<name>SYGB_TRIL1</name>
<comment type="catalytic activity">
    <reaction evidence="1">
        <text>tRNA(Gly) + glycine + ATP = glycyl-tRNA(Gly) + AMP + diphosphate</text>
        <dbReference type="Rhea" id="RHEA:16013"/>
        <dbReference type="Rhea" id="RHEA-COMP:9664"/>
        <dbReference type="Rhea" id="RHEA-COMP:9683"/>
        <dbReference type="ChEBI" id="CHEBI:30616"/>
        <dbReference type="ChEBI" id="CHEBI:33019"/>
        <dbReference type="ChEBI" id="CHEBI:57305"/>
        <dbReference type="ChEBI" id="CHEBI:78442"/>
        <dbReference type="ChEBI" id="CHEBI:78522"/>
        <dbReference type="ChEBI" id="CHEBI:456215"/>
        <dbReference type="EC" id="6.1.1.14"/>
    </reaction>
</comment>
<comment type="subunit">
    <text evidence="1">Tetramer of two alpha and two beta subunits.</text>
</comment>
<comment type="subcellular location">
    <subcellularLocation>
        <location evidence="1">Cytoplasm</location>
    </subcellularLocation>
</comment>
<comment type="similarity">
    <text evidence="1">Belongs to the class-II aminoacyl-tRNA synthetase family.</text>
</comment>
<feature type="chain" id="PRO_1000101282" description="Glycine--tRNA ligase beta subunit">
    <location>
        <begin position="1"/>
        <end position="687"/>
    </location>
</feature>